<dbReference type="EMBL" id="L77117">
    <property type="protein sequence ID" value="AAB98608.1"/>
    <property type="molecule type" value="Genomic_DNA"/>
</dbReference>
<dbReference type="PIR" id="F64376">
    <property type="entry name" value="F64376"/>
</dbReference>
<dbReference type="FunCoup" id="Q58031">
    <property type="interactions" value="7"/>
</dbReference>
<dbReference type="STRING" id="243232.MJ_0614"/>
<dbReference type="PaxDb" id="243232-MJ_0614"/>
<dbReference type="EnsemblBacteria" id="AAB98608">
    <property type="protein sequence ID" value="AAB98608"/>
    <property type="gene ID" value="MJ_0614"/>
</dbReference>
<dbReference type="KEGG" id="mja:MJ_0614"/>
<dbReference type="eggNOG" id="arCOG04850">
    <property type="taxonomic scope" value="Archaea"/>
</dbReference>
<dbReference type="HOGENOM" id="CLU_152996_1_0_2"/>
<dbReference type="InParanoid" id="Q58031"/>
<dbReference type="Proteomes" id="UP000000805">
    <property type="component" value="Chromosome"/>
</dbReference>
<dbReference type="InterPro" id="IPR002572">
    <property type="entry name" value="DUF22"/>
</dbReference>
<dbReference type="Pfam" id="PF01629">
    <property type="entry name" value="DUF22"/>
    <property type="match status" value="1"/>
</dbReference>
<organism>
    <name type="scientific">Methanocaldococcus jannaschii (strain ATCC 43067 / DSM 2661 / JAL-1 / JCM 10045 / NBRC 100440)</name>
    <name type="common">Methanococcus jannaschii</name>
    <dbReference type="NCBI Taxonomy" id="243232"/>
    <lineage>
        <taxon>Archaea</taxon>
        <taxon>Methanobacteriati</taxon>
        <taxon>Methanobacteriota</taxon>
        <taxon>Methanomada group</taxon>
        <taxon>Methanococci</taxon>
        <taxon>Methanococcales</taxon>
        <taxon>Methanocaldococcaceae</taxon>
        <taxon>Methanocaldococcus</taxon>
    </lineage>
</organism>
<name>Y614_METJA</name>
<keyword id="KW-1185">Reference proteome</keyword>
<gene>
    <name type="ordered locus">MJ0614</name>
</gene>
<sequence length="130" mass="14873">MVMFMVFRILGRMTKIEKEIKEEEAKYDLIIKNEAKIEPIVAEEDMEFKQGDIKPIRIKKIKIPPMSVLLICPYGRHRVGHVVAVGEEVPMPIDVEREVDMAMFACGFEGEVKKGDLIGMLLILAAEKRE</sequence>
<reference key="1">
    <citation type="journal article" date="1996" name="Science">
        <title>Complete genome sequence of the methanogenic archaeon, Methanococcus jannaschii.</title>
        <authorList>
            <person name="Bult C.J."/>
            <person name="White O."/>
            <person name="Olsen G.J."/>
            <person name="Zhou L."/>
            <person name="Fleischmann R.D."/>
            <person name="Sutton G.G."/>
            <person name="Blake J.A."/>
            <person name="FitzGerald L.M."/>
            <person name="Clayton R.A."/>
            <person name="Gocayne J.D."/>
            <person name="Kerlavage A.R."/>
            <person name="Dougherty B.A."/>
            <person name="Tomb J.-F."/>
            <person name="Adams M.D."/>
            <person name="Reich C.I."/>
            <person name="Overbeek R."/>
            <person name="Kirkness E.F."/>
            <person name="Weinstock K.G."/>
            <person name="Merrick J.M."/>
            <person name="Glodek A."/>
            <person name="Scott J.L."/>
            <person name="Geoghagen N.S.M."/>
            <person name="Weidman J.F."/>
            <person name="Fuhrmann J.L."/>
            <person name="Nguyen D."/>
            <person name="Utterback T.R."/>
            <person name="Kelley J.M."/>
            <person name="Peterson J.D."/>
            <person name="Sadow P.W."/>
            <person name="Hanna M.C."/>
            <person name="Cotton M.D."/>
            <person name="Roberts K.M."/>
            <person name="Hurst M.A."/>
            <person name="Kaine B.P."/>
            <person name="Borodovsky M."/>
            <person name="Klenk H.-P."/>
            <person name="Fraser C.M."/>
            <person name="Smith H.O."/>
            <person name="Woese C.R."/>
            <person name="Venter J.C."/>
        </authorList>
    </citation>
    <scope>NUCLEOTIDE SEQUENCE [LARGE SCALE GENOMIC DNA]</scope>
    <source>
        <strain>ATCC 43067 / DSM 2661 / JAL-1 / JCM 10045 / NBRC 100440</strain>
    </source>
</reference>
<proteinExistence type="predicted"/>
<feature type="chain" id="PRO_0000106959" description="Uncharacterized protein MJ0614">
    <location>
        <begin position="1"/>
        <end position="130"/>
    </location>
</feature>
<accession>Q58031</accession>
<protein>
    <recommendedName>
        <fullName>Uncharacterized protein MJ0614</fullName>
    </recommendedName>
</protein>